<evidence type="ECO:0000250" key="1">
    <source>
        <dbReference type="UniProtKB" id="P62263"/>
    </source>
</evidence>
<evidence type="ECO:0000305" key="2"/>
<dbReference type="EMBL" id="F14677">
    <property type="protein sequence ID" value="CAA23190.1"/>
    <property type="molecule type" value="mRNA"/>
</dbReference>
<dbReference type="FunCoup" id="Q29303">
    <property type="interactions" value="2222"/>
</dbReference>
<dbReference type="InParanoid" id="Q29303"/>
<dbReference type="Proteomes" id="UP000008227">
    <property type="component" value="Unplaced"/>
</dbReference>
<dbReference type="Proteomes" id="UP000314985">
    <property type="component" value="Unplaced"/>
</dbReference>
<dbReference type="Proteomes" id="UP000694570">
    <property type="component" value="Unplaced"/>
</dbReference>
<dbReference type="Proteomes" id="UP000694571">
    <property type="component" value="Unplaced"/>
</dbReference>
<dbReference type="Proteomes" id="UP000694720">
    <property type="component" value="Unplaced"/>
</dbReference>
<dbReference type="Proteomes" id="UP000694722">
    <property type="component" value="Unplaced"/>
</dbReference>
<dbReference type="Proteomes" id="UP000694723">
    <property type="component" value="Unplaced"/>
</dbReference>
<dbReference type="Proteomes" id="UP000694724">
    <property type="component" value="Unplaced"/>
</dbReference>
<dbReference type="Proteomes" id="UP000694725">
    <property type="component" value="Unplaced"/>
</dbReference>
<dbReference type="Proteomes" id="UP000694726">
    <property type="component" value="Unplaced"/>
</dbReference>
<dbReference type="Proteomes" id="UP000694727">
    <property type="component" value="Unplaced"/>
</dbReference>
<dbReference type="Proteomes" id="UP000694728">
    <property type="component" value="Unplaced"/>
</dbReference>
<dbReference type="GO" id="GO:0005737">
    <property type="term" value="C:cytoplasm"/>
    <property type="evidence" value="ECO:0007669"/>
    <property type="project" value="UniProtKB-SubCell"/>
</dbReference>
<dbReference type="GO" id="GO:0005730">
    <property type="term" value="C:nucleolus"/>
    <property type="evidence" value="ECO:0007669"/>
    <property type="project" value="UniProtKB-SubCell"/>
</dbReference>
<dbReference type="GO" id="GO:0005840">
    <property type="term" value="C:ribosome"/>
    <property type="evidence" value="ECO:0007669"/>
    <property type="project" value="UniProtKB-KW"/>
</dbReference>
<dbReference type="GO" id="GO:0032040">
    <property type="term" value="C:small-subunit processome"/>
    <property type="evidence" value="ECO:0000250"/>
    <property type="project" value="UniProtKB"/>
</dbReference>
<dbReference type="GO" id="GO:0003735">
    <property type="term" value="F:structural constituent of ribosome"/>
    <property type="evidence" value="ECO:0007669"/>
    <property type="project" value="InterPro"/>
</dbReference>
<dbReference type="GO" id="GO:0042274">
    <property type="term" value="P:ribosomal small subunit biogenesis"/>
    <property type="evidence" value="ECO:0000250"/>
    <property type="project" value="UniProtKB"/>
</dbReference>
<dbReference type="GO" id="GO:0006412">
    <property type="term" value="P:translation"/>
    <property type="evidence" value="ECO:0007669"/>
    <property type="project" value="InterPro"/>
</dbReference>
<dbReference type="FunFam" id="3.30.420.80:FF:000018">
    <property type="entry name" value="40S ribosomal protein S14"/>
    <property type="match status" value="1"/>
</dbReference>
<dbReference type="Gene3D" id="3.30.420.80">
    <property type="entry name" value="Ribosomal protein S11"/>
    <property type="match status" value="1"/>
</dbReference>
<dbReference type="InterPro" id="IPR001971">
    <property type="entry name" value="Ribosomal_uS11"/>
</dbReference>
<dbReference type="InterPro" id="IPR036967">
    <property type="entry name" value="Ribosomal_uS11_sf"/>
</dbReference>
<dbReference type="PANTHER" id="PTHR11759">
    <property type="entry name" value="40S RIBOSOMAL PROTEIN S14/30S RIBOSOMAL PROTEIN S11"/>
    <property type="match status" value="1"/>
</dbReference>
<dbReference type="Pfam" id="PF00411">
    <property type="entry name" value="Ribosomal_S11"/>
    <property type="match status" value="1"/>
</dbReference>
<dbReference type="PIRSF" id="PIRSF002131">
    <property type="entry name" value="Ribosomal_S11"/>
    <property type="match status" value="1"/>
</dbReference>
<dbReference type="SUPFAM" id="SSF53137">
    <property type="entry name" value="Translational machinery components"/>
    <property type="match status" value="1"/>
</dbReference>
<comment type="function">
    <text evidence="1">Component of the small ribosomal subunit. The ribosome is a large ribonucleoprotein complex responsible for the synthesis of proteins in the cell. Part of the small subunit (SSU) processome, first precursor of the small eukaryotic ribosomal subunit. During the assembly of the SSU processome in the nucleolus, many ribosome biogenesis factors, an RNA chaperone and ribosomal proteins associate with the nascent pre-rRNA and work in concert to generate RNA folding, modifications, rearrangements and cleavage as well as targeted degradation of pre-ribosomal RNA by the RNA exosome.</text>
</comment>
<comment type="subunit">
    <text evidence="1">Component of the small ribosomal subunit. Part of the small subunit (SSU) processome, composed of more than 70 proteins and the RNA chaperone small nucleolar RNA (snoRNA) U3.</text>
</comment>
<comment type="subcellular location">
    <subcellularLocation>
        <location evidence="1">Cytoplasm</location>
    </subcellularLocation>
    <subcellularLocation>
        <location evidence="1">Nucleus</location>
        <location evidence="1">Nucleolus</location>
    </subcellularLocation>
</comment>
<comment type="similarity">
    <text evidence="2">Belongs to the universal ribosomal protein uS11 family.</text>
</comment>
<accession>Q29303</accession>
<feature type="chain" id="PRO_0000123339" description="Small ribosomal subunit protein uS11">
    <location>
        <begin position="1" status="less than"/>
        <end position="79" status="greater than"/>
    </location>
</feature>
<feature type="modified residue" description="Phosphoserine" evidence="1">
    <location>
        <position position="14"/>
    </location>
</feature>
<feature type="cross-link" description="Glycyl lysine isopeptide (Lys-Gly) (interchain with G-Cter in SUMO2)" evidence="1">
    <location>
        <position position="59"/>
    </location>
</feature>
<feature type="cross-link" description="Glycyl lysine isopeptide (Lys-Gly) (interchain with G-Cter in SUMO2)" evidence="1">
    <location>
        <position position="61"/>
    </location>
</feature>
<feature type="non-terminal residue">
    <location>
        <position position="1"/>
    </location>
</feature>
<feature type="non-terminal residue">
    <location>
        <position position="79"/>
    </location>
</feature>
<gene>
    <name type="primary">RPS14</name>
</gene>
<name>RS14_PIG</name>
<reference key="1">
    <citation type="journal article" date="1996" name="Mamm. Genome">
        <title>Evaluation and characterization of a porcine small intestine cDNA library: analysis of 839 clones.</title>
        <authorList>
            <person name="Winteroe A.K."/>
            <person name="Fredholm M."/>
            <person name="Davies W."/>
        </authorList>
    </citation>
    <scope>NUCLEOTIDE SEQUENCE [LARGE SCALE MRNA]</scope>
    <source>
        <tissue>Small intestine</tissue>
    </source>
</reference>
<sequence>PRKGKEKKEEQVISLGPQVAEGENVFGVCHIFASPNDTFVHVTDLSGXESICRVTGGMKMKADRXEXSPYXAMLAAQAV</sequence>
<proteinExistence type="evidence at transcript level"/>
<organism>
    <name type="scientific">Sus scrofa</name>
    <name type="common">Pig</name>
    <dbReference type="NCBI Taxonomy" id="9823"/>
    <lineage>
        <taxon>Eukaryota</taxon>
        <taxon>Metazoa</taxon>
        <taxon>Chordata</taxon>
        <taxon>Craniata</taxon>
        <taxon>Vertebrata</taxon>
        <taxon>Euteleostomi</taxon>
        <taxon>Mammalia</taxon>
        <taxon>Eutheria</taxon>
        <taxon>Laurasiatheria</taxon>
        <taxon>Artiodactyla</taxon>
        <taxon>Suina</taxon>
        <taxon>Suidae</taxon>
        <taxon>Sus</taxon>
    </lineage>
</organism>
<protein>
    <recommendedName>
        <fullName evidence="2">Small ribosomal subunit protein uS11</fullName>
    </recommendedName>
    <alternativeName>
        <fullName>40S ribosomal protein S14</fullName>
    </alternativeName>
</protein>
<keyword id="KW-0963">Cytoplasm</keyword>
<keyword id="KW-1017">Isopeptide bond</keyword>
<keyword id="KW-0539">Nucleus</keyword>
<keyword id="KW-0597">Phosphoprotein</keyword>
<keyword id="KW-1185">Reference proteome</keyword>
<keyword id="KW-0687">Ribonucleoprotein</keyword>
<keyword id="KW-0689">Ribosomal protein</keyword>
<keyword id="KW-0832">Ubl conjugation</keyword>